<proteinExistence type="evidence at protein level"/>
<accession>Q9D5P4</accession>
<accession>B2RQL4</accession>
<reference key="1">
    <citation type="journal article" date="2005" name="Science">
        <title>The transcriptional landscape of the mammalian genome.</title>
        <authorList>
            <person name="Carninci P."/>
            <person name="Kasukawa T."/>
            <person name="Katayama S."/>
            <person name="Gough J."/>
            <person name="Frith M.C."/>
            <person name="Maeda N."/>
            <person name="Oyama R."/>
            <person name="Ravasi T."/>
            <person name="Lenhard B."/>
            <person name="Wells C."/>
            <person name="Kodzius R."/>
            <person name="Shimokawa K."/>
            <person name="Bajic V.B."/>
            <person name="Brenner S.E."/>
            <person name="Batalov S."/>
            <person name="Forrest A.R."/>
            <person name="Zavolan M."/>
            <person name="Davis M.J."/>
            <person name="Wilming L.G."/>
            <person name="Aidinis V."/>
            <person name="Allen J.E."/>
            <person name="Ambesi-Impiombato A."/>
            <person name="Apweiler R."/>
            <person name="Aturaliya R.N."/>
            <person name="Bailey T.L."/>
            <person name="Bansal M."/>
            <person name="Baxter L."/>
            <person name="Beisel K.W."/>
            <person name="Bersano T."/>
            <person name="Bono H."/>
            <person name="Chalk A.M."/>
            <person name="Chiu K.P."/>
            <person name="Choudhary V."/>
            <person name="Christoffels A."/>
            <person name="Clutterbuck D.R."/>
            <person name="Crowe M.L."/>
            <person name="Dalla E."/>
            <person name="Dalrymple B.P."/>
            <person name="de Bono B."/>
            <person name="Della Gatta G."/>
            <person name="di Bernardo D."/>
            <person name="Down T."/>
            <person name="Engstrom P."/>
            <person name="Fagiolini M."/>
            <person name="Faulkner G."/>
            <person name="Fletcher C.F."/>
            <person name="Fukushima T."/>
            <person name="Furuno M."/>
            <person name="Futaki S."/>
            <person name="Gariboldi M."/>
            <person name="Georgii-Hemming P."/>
            <person name="Gingeras T.R."/>
            <person name="Gojobori T."/>
            <person name="Green R.E."/>
            <person name="Gustincich S."/>
            <person name="Harbers M."/>
            <person name="Hayashi Y."/>
            <person name="Hensch T.K."/>
            <person name="Hirokawa N."/>
            <person name="Hill D."/>
            <person name="Huminiecki L."/>
            <person name="Iacono M."/>
            <person name="Ikeo K."/>
            <person name="Iwama A."/>
            <person name="Ishikawa T."/>
            <person name="Jakt M."/>
            <person name="Kanapin A."/>
            <person name="Katoh M."/>
            <person name="Kawasawa Y."/>
            <person name="Kelso J."/>
            <person name="Kitamura H."/>
            <person name="Kitano H."/>
            <person name="Kollias G."/>
            <person name="Krishnan S.P."/>
            <person name="Kruger A."/>
            <person name="Kummerfeld S.K."/>
            <person name="Kurochkin I.V."/>
            <person name="Lareau L.F."/>
            <person name="Lazarevic D."/>
            <person name="Lipovich L."/>
            <person name="Liu J."/>
            <person name="Liuni S."/>
            <person name="McWilliam S."/>
            <person name="Madan Babu M."/>
            <person name="Madera M."/>
            <person name="Marchionni L."/>
            <person name="Matsuda H."/>
            <person name="Matsuzawa S."/>
            <person name="Miki H."/>
            <person name="Mignone F."/>
            <person name="Miyake S."/>
            <person name="Morris K."/>
            <person name="Mottagui-Tabar S."/>
            <person name="Mulder N."/>
            <person name="Nakano N."/>
            <person name="Nakauchi H."/>
            <person name="Ng P."/>
            <person name="Nilsson R."/>
            <person name="Nishiguchi S."/>
            <person name="Nishikawa S."/>
            <person name="Nori F."/>
            <person name="Ohara O."/>
            <person name="Okazaki Y."/>
            <person name="Orlando V."/>
            <person name="Pang K.C."/>
            <person name="Pavan W.J."/>
            <person name="Pavesi G."/>
            <person name="Pesole G."/>
            <person name="Petrovsky N."/>
            <person name="Piazza S."/>
            <person name="Reed J."/>
            <person name="Reid J.F."/>
            <person name="Ring B.Z."/>
            <person name="Ringwald M."/>
            <person name="Rost B."/>
            <person name="Ruan Y."/>
            <person name="Salzberg S.L."/>
            <person name="Sandelin A."/>
            <person name="Schneider C."/>
            <person name="Schoenbach C."/>
            <person name="Sekiguchi K."/>
            <person name="Semple C.A."/>
            <person name="Seno S."/>
            <person name="Sessa L."/>
            <person name="Sheng Y."/>
            <person name="Shibata Y."/>
            <person name="Shimada H."/>
            <person name="Shimada K."/>
            <person name="Silva D."/>
            <person name="Sinclair B."/>
            <person name="Sperling S."/>
            <person name="Stupka E."/>
            <person name="Sugiura K."/>
            <person name="Sultana R."/>
            <person name="Takenaka Y."/>
            <person name="Taki K."/>
            <person name="Tammoja K."/>
            <person name="Tan S.L."/>
            <person name="Tang S."/>
            <person name="Taylor M.S."/>
            <person name="Tegner J."/>
            <person name="Teichmann S.A."/>
            <person name="Ueda H.R."/>
            <person name="van Nimwegen E."/>
            <person name="Verardo R."/>
            <person name="Wei C.L."/>
            <person name="Yagi K."/>
            <person name="Yamanishi H."/>
            <person name="Zabarovsky E."/>
            <person name="Zhu S."/>
            <person name="Zimmer A."/>
            <person name="Hide W."/>
            <person name="Bult C."/>
            <person name="Grimmond S.M."/>
            <person name="Teasdale R.D."/>
            <person name="Liu E.T."/>
            <person name="Brusic V."/>
            <person name="Quackenbush J."/>
            <person name="Wahlestedt C."/>
            <person name="Mattick J.S."/>
            <person name="Hume D.A."/>
            <person name="Kai C."/>
            <person name="Sasaki D."/>
            <person name="Tomaru Y."/>
            <person name="Fukuda S."/>
            <person name="Kanamori-Katayama M."/>
            <person name="Suzuki M."/>
            <person name="Aoki J."/>
            <person name="Arakawa T."/>
            <person name="Iida J."/>
            <person name="Imamura K."/>
            <person name="Itoh M."/>
            <person name="Kato T."/>
            <person name="Kawaji H."/>
            <person name="Kawagashira N."/>
            <person name="Kawashima T."/>
            <person name="Kojima M."/>
            <person name="Kondo S."/>
            <person name="Konno H."/>
            <person name="Nakano K."/>
            <person name="Ninomiya N."/>
            <person name="Nishio T."/>
            <person name="Okada M."/>
            <person name="Plessy C."/>
            <person name="Shibata K."/>
            <person name="Shiraki T."/>
            <person name="Suzuki S."/>
            <person name="Tagami M."/>
            <person name="Waki K."/>
            <person name="Watahiki A."/>
            <person name="Okamura-Oho Y."/>
            <person name="Suzuki H."/>
            <person name="Kawai J."/>
            <person name="Hayashizaki Y."/>
        </authorList>
    </citation>
    <scope>NUCLEOTIDE SEQUENCE [LARGE SCALE MRNA]</scope>
    <source>
        <strain>C57BL/6J</strain>
        <tissue>Testis</tissue>
    </source>
</reference>
<reference key="2">
    <citation type="journal article" date="2009" name="PLoS Biol.">
        <title>Lineage-specific biology revealed by a finished genome assembly of the mouse.</title>
        <authorList>
            <person name="Church D.M."/>
            <person name="Goodstadt L."/>
            <person name="Hillier L.W."/>
            <person name="Zody M.C."/>
            <person name="Goldstein S."/>
            <person name="She X."/>
            <person name="Bult C.J."/>
            <person name="Agarwala R."/>
            <person name="Cherry J.L."/>
            <person name="DiCuccio M."/>
            <person name="Hlavina W."/>
            <person name="Kapustin Y."/>
            <person name="Meric P."/>
            <person name="Maglott D."/>
            <person name="Birtle Z."/>
            <person name="Marques A.C."/>
            <person name="Graves T."/>
            <person name="Zhou S."/>
            <person name="Teague B."/>
            <person name="Potamousis K."/>
            <person name="Churas C."/>
            <person name="Place M."/>
            <person name="Herschleb J."/>
            <person name="Runnheim R."/>
            <person name="Forrest D."/>
            <person name="Amos-Landgraf J."/>
            <person name="Schwartz D.C."/>
            <person name="Cheng Z."/>
            <person name="Lindblad-Toh K."/>
            <person name="Eichler E.E."/>
            <person name="Ponting C.P."/>
        </authorList>
    </citation>
    <scope>NUCLEOTIDE SEQUENCE [LARGE SCALE GENOMIC DNA]</scope>
    <source>
        <strain>C57BL/6J</strain>
    </source>
</reference>
<reference key="3">
    <citation type="journal article" date="2004" name="Genome Res.">
        <title>The status, quality, and expansion of the NIH full-length cDNA project: the Mammalian Gene Collection (MGC).</title>
        <authorList>
            <consortium name="The MGC Project Team"/>
        </authorList>
    </citation>
    <scope>NUCLEOTIDE SEQUENCE [LARGE SCALE MRNA]</scope>
    <source>
        <tissue>Brain</tissue>
    </source>
</reference>
<reference key="4">
    <citation type="journal article" date="2010" name="Cell">
        <title>A tissue-specific atlas of mouse protein phosphorylation and expression.</title>
        <authorList>
            <person name="Huttlin E.L."/>
            <person name="Jedrychowski M.P."/>
            <person name="Elias J.E."/>
            <person name="Goswami T."/>
            <person name="Rad R."/>
            <person name="Beausoleil S.A."/>
            <person name="Villen J."/>
            <person name="Haas W."/>
            <person name="Sowa M.E."/>
            <person name="Gygi S.P."/>
        </authorList>
    </citation>
    <scope>IDENTIFICATION BY MASS SPECTROMETRY [LARGE SCALE ANALYSIS]</scope>
</reference>
<reference key="5">
    <citation type="journal article" date="2020" name="Sci. Rep.">
        <title>ADAD1 and ADAD2, testis-specific adenosine deaminase domain-containing proteins, are required for male fertility.</title>
        <authorList>
            <person name="Snyder E."/>
            <person name="Chukrallah L."/>
            <person name="Seltzer K."/>
            <person name="Goodwin L."/>
            <person name="Braun R.E."/>
        </authorList>
    </citation>
    <scope>FUNCTION</scope>
    <scope>SUBCELLULAR LOCATION</scope>
    <scope>DISRUPTION PHENOTYPE</scope>
    <scope>TISSUE SPECIFICITY</scope>
</reference>
<organism>
    <name type="scientific">Mus musculus</name>
    <name type="common">Mouse</name>
    <dbReference type="NCBI Taxonomy" id="10090"/>
    <lineage>
        <taxon>Eukaryota</taxon>
        <taxon>Metazoa</taxon>
        <taxon>Chordata</taxon>
        <taxon>Craniata</taxon>
        <taxon>Vertebrata</taxon>
        <taxon>Euteleostomi</taxon>
        <taxon>Mammalia</taxon>
        <taxon>Eutheria</taxon>
        <taxon>Euarchontoglires</taxon>
        <taxon>Glires</taxon>
        <taxon>Rodentia</taxon>
        <taxon>Myomorpha</taxon>
        <taxon>Muroidea</taxon>
        <taxon>Muridae</taxon>
        <taxon>Murinae</taxon>
        <taxon>Mus</taxon>
        <taxon>Mus</taxon>
    </lineage>
</organism>
<comment type="function">
    <text evidence="4">Required for male fertility and normal male germ cell differentiation.</text>
</comment>
<comment type="subcellular location">
    <subcellularLocation>
        <location evidence="4">Nucleus</location>
    </subcellularLocation>
    <subcellularLocation>
        <location evidence="4">Cytoplasm</location>
    </subcellularLocation>
    <text evidence="4">Diffusely cytoplasmic early in pachytene spermatocytes and coalesces into several perinuclear granules by late pachynema.</text>
</comment>
<comment type="tissue specificity">
    <text evidence="4">Testis-specific (at protein level).</text>
</comment>
<comment type="disruption phenotype">
    <text evidence="4">Male mice are sterile and show defects in germ-cell development.</text>
</comment>
<comment type="similarity">
    <text evidence="5">Belongs to the ADAD family.</text>
</comment>
<comment type="sequence caution" evidence="5">
    <conflict type="erroneous initiation">
        <sequence resource="EMBL-CDS" id="BAB29697"/>
    </conflict>
    <text>Truncated N-terminus.</text>
</comment>
<comment type="sequence caution" evidence="5">
    <conflict type="frameshift">
        <sequence resource="EMBL-CDS" id="BAB29697"/>
    </conflict>
</comment>
<keyword id="KW-0963">Cytoplasm</keyword>
<keyword id="KW-0221">Differentiation</keyword>
<keyword id="KW-0539">Nucleus</keyword>
<keyword id="KW-1185">Reference proteome</keyword>
<keyword id="KW-0694">RNA-binding</keyword>
<keyword id="KW-0744">Spermatogenesis</keyword>
<protein>
    <recommendedName>
        <fullName evidence="5">Adenosine deaminase domain-containing protein 2</fullName>
    </recommendedName>
</protein>
<gene>
    <name evidence="6" type="primary">Adad2</name>
</gene>
<name>ADAD2_MOUSE</name>
<dbReference type="EMBL" id="AK015063">
    <property type="protein sequence ID" value="BAB29697.1"/>
    <property type="status" value="ALT_SEQ"/>
    <property type="molecule type" value="mRNA"/>
</dbReference>
<dbReference type="EMBL" id="AC104882">
    <property type="status" value="NOT_ANNOTATED_CDS"/>
    <property type="molecule type" value="Genomic_DNA"/>
</dbReference>
<dbReference type="EMBL" id="BC137980">
    <property type="protein sequence ID" value="AAI37981.1"/>
    <property type="molecule type" value="mRNA"/>
</dbReference>
<dbReference type="CCDS" id="CCDS52683.1"/>
<dbReference type="RefSeq" id="NP_083704.1">
    <property type="nucleotide sequence ID" value="NM_029428.2"/>
</dbReference>
<dbReference type="SMR" id="Q9D5P4"/>
<dbReference type="FunCoup" id="Q9D5P4">
    <property type="interactions" value="810"/>
</dbReference>
<dbReference type="STRING" id="10090.ENSMUSP00000095964"/>
<dbReference type="PhosphoSitePlus" id="Q9D5P4"/>
<dbReference type="SwissPalm" id="Q9D5P4"/>
<dbReference type="PaxDb" id="10090-ENSMUSP00000095964"/>
<dbReference type="ProteomicsDB" id="285759"/>
<dbReference type="ProteomicsDB" id="334664"/>
<dbReference type="Antibodypedia" id="30571">
    <property type="antibodies" value="70 antibodies from 20 providers"/>
</dbReference>
<dbReference type="Ensembl" id="ENSMUST00000098361.4">
    <property type="protein sequence ID" value="ENSMUSP00000095964.3"/>
    <property type="gene ID" value="ENSMUSG00000024266.9"/>
</dbReference>
<dbReference type="GeneID" id="75773"/>
<dbReference type="KEGG" id="mmu:75773"/>
<dbReference type="UCSC" id="uc009nqa.2">
    <property type="organism name" value="mouse"/>
</dbReference>
<dbReference type="AGR" id="MGI:1923023"/>
<dbReference type="CTD" id="161931"/>
<dbReference type="MGI" id="MGI:1923023">
    <property type="gene designation" value="Adad2"/>
</dbReference>
<dbReference type="VEuPathDB" id="HostDB:ENSMUSG00000024266"/>
<dbReference type="eggNOG" id="KOG2777">
    <property type="taxonomic scope" value="Eukaryota"/>
</dbReference>
<dbReference type="GeneTree" id="ENSGT00940000161900"/>
<dbReference type="HOGENOM" id="CLU_005382_4_2_1"/>
<dbReference type="InParanoid" id="Q9D5P4"/>
<dbReference type="OMA" id="WCLGDED"/>
<dbReference type="OrthoDB" id="10268011at2759"/>
<dbReference type="PhylomeDB" id="Q9D5P4"/>
<dbReference type="TreeFam" id="TF315806"/>
<dbReference type="BioGRID-ORCS" id="75773">
    <property type="hits" value="5 hits in 77 CRISPR screens"/>
</dbReference>
<dbReference type="CD-CODE" id="DE1E139C">
    <property type="entry name" value="Chromatoid body"/>
</dbReference>
<dbReference type="PRO" id="PR:Q9D5P4"/>
<dbReference type="Proteomes" id="UP000000589">
    <property type="component" value="Chromosome 8"/>
</dbReference>
<dbReference type="RNAct" id="Q9D5P4">
    <property type="molecule type" value="protein"/>
</dbReference>
<dbReference type="Bgee" id="ENSMUSG00000024266">
    <property type="expression patterns" value="Expressed in spermatocyte and 32 other cell types or tissues"/>
</dbReference>
<dbReference type="GO" id="GO:0005737">
    <property type="term" value="C:cytoplasm"/>
    <property type="evidence" value="ECO:0000314"/>
    <property type="project" value="UniProtKB"/>
</dbReference>
<dbReference type="GO" id="GO:0005634">
    <property type="term" value="C:nucleus"/>
    <property type="evidence" value="ECO:0000314"/>
    <property type="project" value="UniProtKB"/>
</dbReference>
<dbReference type="GO" id="GO:0004000">
    <property type="term" value="F:adenosine deaminase activity"/>
    <property type="evidence" value="ECO:0007669"/>
    <property type="project" value="InterPro"/>
</dbReference>
<dbReference type="GO" id="GO:0003723">
    <property type="term" value="F:RNA binding"/>
    <property type="evidence" value="ECO:0007669"/>
    <property type="project" value="UniProtKB-KW"/>
</dbReference>
<dbReference type="GO" id="GO:0006396">
    <property type="term" value="P:RNA processing"/>
    <property type="evidence" value="ECO:0007669"/>
    <property type="project" value="InterPro"/>
</dbReference>
<dbReference type="GO" id="GO:0007286">
    <property type="term" value="P:spermatid development"/>
    <property type="evidence" value="ECO:0000315"/>
    <property type="project" value="UniProtKB"/>
</dbReference>
<dbReference type="FunFam" id="3.30.160.20:FF:000056">
    <property type="entry name" value="Adenosine deaminase domain-containing 2"/>
    <property type="match status" value="1"/>
</dbReference>
<dbReference type="Gene3D" id="3.30.160.20">
    <property type="match status" value="1"/>
</dbReference>
<dbReference type="InterPro" id="IPR002466">
    <property type="entry name" value="A_deamin"/>
</dbReference>
<dbReference type="InterPro" id="IPR014720">
    <property type="entry name" value="dsRBD_dom"/>
</dbReference>
<dbReference type="PANTHER" id="PTHR10910:SF106">
    <property type="entry name" value="ADENOSINE DEAMINASE DOMAIN-CONTAINING PROTEIN 2"/>
    <property type="match status" value="1"/>
</dbReference>
<dbReference type="PANTHER" id="PTHR10910">
    <property type="entry name" value="EUKARYOTE SPECIFIC DSRNA BINDING PROTEIN"/>
    <property type="match status" value="1"/>
</dbReference>
<dbReference type="Pfam" id="PF02137">
    <property type="entry name" value="A_deamin"/>
    <property type="match status" value="1"/>
</dbReference>
<dbReference type="Pfam" id="PF00035">
    <property type="entry name" value="dsrm"/>
    <property type="match status" value="1"/>
</dbReference>
<dbReference type="SMART" id="SM00552">
    <property type="entry name" value="ADEAMc"/>
    <property type="match status" value="1"/>
</dbReference>
<dbReference type="SMART" id="SM00358">
    <property type="entry name" value="DSRM"/>
    <property type="match status" value="1"/>
</dbReference>
<dbReference type="SUPFAM" id="SSF54768">
    <property type="entry name" value="dsRNA-binding domain-like"/>
    <property type="match status" value="1"/>
</dbReference>
<dbReference type="PROSITE" id="PS50141">
    <property type="entry name" value="A_DEAMIN_EDITASE"/>
    <property type="match status" value="1"/>
</dbReference>
<dbReference type="PROSITE" id="PS50137">
    <property type="entry name" value="DS_RBD"/>
    <property type="match status" value="1"/>
</dbReference>
<sequence length="561" mass="59299">MASVDEGGRRRPRLAASLQISPGPWKPSGGQEPTEAGDAAPRTAEHGVAGAQEAHREACKALGGSVLSPGPAGDFPGALHGLSMLPKDPPPAQAVALLTQCMANLGVSLTFLEDQTAGPGSSFSVCADLDGLVCPAGTGSSKLEAKQQAALSALQYIQKQLERPEPLVTPRQPLLTSLSIETILTHEQRCAAVVSAGLDRLLSESSPYQACKGTVAAVILEREVQGSIGHSKETYELVALGTGSSSCAGWLEFSGRRLHDCHGLVIARRALLRFFFRQLLLVTQGGPKGQERSVLTPQPGPGPPFALKPGVFLHLYVSNTPKGAAHDIYLPLASEDSVLHSPAFRLQAHVCGQLKPVSYVAPALRDTHVGCLSASDKLARWAILGLGGGLLAHFLPPLYATSLVLADPCHDPSTLNRVIHSRPRLDSVLGSCLPCPYVRTTLHLFAGPLVAPSDPGPSTCHSLSLNWSLGDPDIEVVDVATGRVKTDSSVGPPSRLCKAAFLSAFRQVARALEKPQLLSLQTYEAAKAVPYREARQQLSLLLDQQGLGAWPSKPLVGKFRH</sequence>
<feature type="chain" id="PRO_0000309526" description="Adenosine deaminase domain-containing protein 2">
    <location>
        <begin position="1"/>
        <end position="561"/>
    </location>
</feature>
<feature type="domain" description="DRBM" evidence="2">
    <location>
        <begin position="90"/>
        <end position="159"/>
    </location>
</feature>
<feature type="domain" description="A to I editase" evidence="1">
    <location>
        <begin position="239"/>
        <end position="560"/>
    </location>
</feature>
<feature type="region of interest" description="Disordered" evidence="3">
    <location>
        <begin position="1"/>
        <end position="53"/>
    </location>
</feature>
<feature type="sequence conflict" description="In Ref. 1; BAB29697." evidence="5" ref="1">
    <original>P</original>
    <variation>L</variation>
    <location>
        <position position="331"/>
    </location>
</feature>
<evidence type="ECO:0000255" key="1">
    <source>
        <dbReference type="PROSITE-ProRule" id="PRU00240"/>
    </source>
</evidence>
<evidence type="ECO:0000255" key="2">
    <source>
        <dbReference type="PROSITE-ProRule" id="PRU00266"/>
    </source>
</evidence>
<evidence type="ECO:0000256" key="3">
    <source>
        <dbReference type="SAM" id="MobiDB-lite"/>
    </source>
</evidence>
<evidence type="ECO:0000269" key="4">
    <source>
    </source>
</evidence>
<evidence type="ECO:0000305" key="5"/>
<evidence type="ECO:0000312" key="6">
    <source>
        <dbReference type="MGI" id="MGI:1923023"/>
    </source>
</evidence>